<dbReference type="EMBL" id="AL123456">
    <property type="protein sequence ID" value="CCP43963.1"/>
    <property type="molecule type" value="Genomic_DNA"/>
</dbReference>
<dbReference type="PIR" id="E70609">
    <property type="entry name" value="E70609"/>
</dbReference>
<dbReference type="RefSeq" id="NP_215723.1">
    <property type="nucleotide sequence ID" value="NC_000962.3"/>
</dbReference>
<dbReference type="PDB" id="2VP8">
    <property type="method" value="X-ray"/>
    <property type="resolution" value="2.64 A"/>
    <property type="chains" value="A/B=2-318"/>
</dbReference>
<dbReference type="PDBsum" id="2VP8"/>
<dbReference type="SMR" id="P9WNC9"/>
<dbReference type="FunCoup" id="P9WNC9">
    <property type="interactions" value="132"/>
</dbReference>
<dbReference type="STRING" id="83332.Rv1207"/>
<dbReference type="PaxDb" id="83332-Rv1207"/>
<dbReference type="DNASU" id="887447"/>
<dbReference type="GeneID" id="887447"/>
<dbReference type="KEGG" id="mtu:Rv1207"/>
<dbReference type="KEGG" id="mtv:RVBD_1207"/>
<dbReference type="TubercuList" id="Rv1207"/>
<dbReference type="eggNOG" id="COG0294">
    <property type="taxonomic scope" value="Bacteria"/>
</dbReference>
<dbReference type="InParanoid" id="P9WNC9"/>
<dbReference type="OrthoDB" id="9811744at2"/>
<dbReference type="PhylomeDB" id="P9WNC9"/>
<dbReference type="BRENDA" id="2.5.1.15">
    <property type="organism ID" value="3445"/>
</dbReference>
<dbReference type="EvolutionaryTrace" id="P9WNC9"/>
<dbReference type="Proteomes" id="UP000001584">
    <property type="component" value="Chromosome"/>
</dbReference>
<dbReference type="GO" id="GO:0005829">
    <property type="term" value="C:cytosol"/>
    <property type="evidence" value="ECO:0000318"/>
    <property type="project" value="GO_Central"/>
</dbReference>
<dbReference type="GO" id="GO:0009396">
    <property type="term" value="P:folic acid-containing compound biosynthetic process"/>
    <property type="evidence" value="ECO:0007669"/>
    <property type="project" value="InterPro"/>
</dbReference>
<dbReference type="CDD" id="cd00739">
    <property type="entry name" value="DHPS"/>
    <property type="match status" value="1"/>
</dbReference>
<dbReference type="FunFam" id="3.20.20.20:FF:000008">
    <property type="entry name" value="Dihydropteroate synthase"/>
    <property type="match status" value="1"/>
</dbReference>
<dbReference type="Gene3D" id="3.20.20.20">
    <property type="entry name" value="Dihydropteroate synthase-like"/>
    <property type="match status" value="1"/>
</dbReference>
<dbReference type="InterPro" id="IPR045031">
    <property type="entry name" value="DHP_synth-like"/>
</dbReference>
<dbReference type="InterPro" id="IPR006390">
    <property type="entry name" value="DHP_synth_dom"/>
</dbReference>
<dbReference type="InterPro" id="IPR011005">
    <property type="entry name" value="Dihydropteroate_synth-like_sf"/>
</dbReference>
<dbReference type="InterPro" id="IPR000489">
    <property type="entry name" value="Pterin-binding_dom"/>
</dbReference>
<dbReference type="NCBIfam" id="TIGR01496">
    <property type="entry name" value="DHPS"/>
    <property type="match status" value="1"/>
</dbReference>
<dbReference type="PANTHER" id="PTHR20941">
    <property type="entry name" value="FOLATE SYNTHESIS PROTEINS"/>
    <property type="match status" value="1"/>
</dbReference>
<dbReference type="PANTHER" id="PTHR20941:SF8">
    <property type="entry name" value="INACTIVE DIHYDROPTEROATE SYNTHASE 2"/>
    <property type="match status" value="1"/>
</dbReference>
<dbReference type="Pfam" id="PF00809">
    <property type="entry name" value="Pterin_bind"/>
    <property type="match status" value="1"/>
</dbReference>
<dbReference type="SUPFAM" id="SSF51717">
    <property type="entry name" value="Dihydropteroate synthetase-like"/>
    <property type="match status" value="1"/>
</dbReference>
<dbReference type="PROSITE" id="PS00792">
    <property type="entry name" value="DHPS_1"/>
    <property type="match status" value="1"/>
</dbReference>
<dbReference type="PROSITE" id="PS00793">
    <property type="entry name" value="DHPS_2"/>
    <property type="match status" value="1"/>
</dbReference>
<dbReference type="PROSITE" id="PS50972">
    <property type="entry name" value="PTERIN_BINDING"/>
    <property type="match status" value="1"/>
</dbReference>
<name>DHPS2_MYCTU</name>
<comment type="function">
    <text evidence="3">Has very low affinity for the DHPS substrate 6-hydroxymethyl-7,8-dihydropterin-pyrophosphate, but can bind the inhibitor dapsone. Seems to lack dihydropteroate synthase activity, and does probably not function in folate metabolism.</text>
</comment>
<comment type="subunit">
    <text evidence="3">Homodimer.</text>
</comment>
<comment type="similarity">
    <text evidence="4">Belongs to the DHPS family.</text>
</comment>
<comment type="caution">
    <text evidence="4">A histidine residue in the pterin-binding domain interferes with substrate binding, and seems to be responsible for abolishing dihydropteroate synthase activity.</text>
</comment>
<protein>
    <recommendedName>
        <fullName>Inactive dihydropteroate synthase 2</fullName>
        <shortName>DHPS 2</shortName>
    </recommendedName>
    <alternativeName>
        <fullName>Dihydropteroate pyrophosphorylase 2</fullName>
    </alternativeName>
</protein>
<feature type="chain" id="PRO_0000168216" description="Inactive dihydropteroate synthase 2">
    <location>
        <begin position="1"/>
        <end position="318"/>
    </location>
</feature>
<feature type="domain" description="Pterin-binding" evidence="1">
    <location>
        <begin position="42"/>
        <end position="299"/>
    </location>
</feature>
<feature type="region of interest" description="Disordered" evidence="2">
    <location>
        <begin position="1"/>
        <end position="25"/>
    </location>
</feature>
<feature type="site" description="Characteristic for family members without dihydropteroate synthase activity">
    <location>
        <position position="220"/>
    </location>
</feature>
<feature type="strand" evidence="5">
    <location>
        <begin position="30"/>
        <end position="32"/>
    </location>
</feature>
<feature type="strand" evidence="5">
    <location>
        <begin position="35"/>
        <end position="37"/>
    </location>
</feature>
<feature type="strand" evidence="5">
    <location>
        <begin position="39"/>
        <end position="41"/>
    </location>
</feature>
<feature type="strand" evidence="5">
    <location>
        <begin position="43"/>
        <end position="48"/>
    </location>
</feature>
<feature type="helix" evidence="5">
    <location>
        <begin position="65"/>
        <end position="76"/>
    </location>
</feature>
<feature type="strand" evidence="5">
    <location>
        <begin position="80"/>
        <end position="84"/>
    </location>
</feature>
<feature type="helix" evidence="5">
    <location>
        <begin position="97"/>
        <end position="114"/>
    </location>
</feature>
<feature type="strand" evidence="5">
    <location>
        <begin position="119"/>
        <end position="123"/>
    </location>
</feature>
<feature type="helix" evidence="5">
    <location>
        <begin position="127"/>
        <end position="136"/>
    </location>
</feature>
<feature type="strand" evidence="5">
    <location>
        <begin position="140"/>
        <end position="143"/>
    </location>
</feature>
<feature type="strand" evidence="5">
    <location>
        <begin position="146"/>
        <end position="149"/>
    </location>
</feature>
<feature type="helix" evidence="5">
    <location>
        <begin position="152"/>
        <end position="159"/>
    </location>
</feature>
<feature type="strand" evidence="5">
    <location>
        <begin position="162"/>
        <end position="166"/>
    </location>
</feature>
<feature type="helix" evidence="5">
    <location>
        <begin position="186"/>
        <end position="206"/>
    </location>
</feature>
<feature type="helix" evidence="5">
    <location>
        <begin position="211"/>
        <end position="213"/>
    </location>
</feature>
<feature type="strand" evidence="5">
    <location>
        <begin position="214"/>
        <end position="217"/>
    </location>
</feature>
<feature type="turn" evidence="5">
    <location>
        <begin position="218"/>
        <end position="221"/>
    </location>
</feature>
<feature type="helix" evidence="5">
    <location>
        <begin position="227"/>
        <end position="234"/>
    </location>
</feature>
<feature type="helix" evidence="5">
    <location>
        <begin position="236"/>
        <end position="240"/>
    </location>
</feature>
<feature type="strand" evidence="5">
    <location>
        <begin position="246"/>
        <end position="248"/>
    </location>
</feature>
<feature type="helix" evidence="5">
    <location>
        <begin position="268"/>
        <end position="280"/>
    </location>
</feature>
<feature type="strand" evidence="5">
    <location>
        <begin position="285"/>
        <end position="289"/>
    </location>
</feature>
<feature type="helix" evidence="5">
    <location>
        <begin position="291"/>
        <end position="304"/>
    </location>
</feature>
<organism>
    <name type="scientific">Mycobacterium tuberculosis (strain ATCC 25618 / H37Rv)</name>
    <dbReference type="NCBI Taxonomy" id="83332"/>
    <lineage>
        <taxon>Bacteria</taxon>
        <taxon>Bacillati</taxon>
        <taxon>Actinomycetota</taxon>
        <taxon>Actinomycetes</taxon>
        <taxon>Mycobacteriales</taxon>
        <taxon>Mycobacteriaceae</taxon>
        <taxon>Mycobacterium</taxon>
        <taxon>Mycobacterium tuberculosis complex</taxon>
    </lineage>
</organism>
<keyword id="KW-0002">3D-structure</keyword>
<keyword id="KW-1185">Reference proteome</keyword>
<proteinExistence type="evidence at protein level"/>
<gene>
    <name type="primary">folP2</name>
    <name type="ordered locus">Rv1207</name>
    <name type="ORF">MTCI364.19</name>
</gene>
<reference key="1">
    <citation type="journal article" date="1998" name="Nature">
        <title>Deciphering the biology of Mycobacterium tuberculosis from the complete genome sequence.</title>
        <authorList>
            <person name="Cole S.T."/>
            <person name="Brosch R."/>
            <person name="Parkhill J."/>
            <person name="Garnier T."/>
            <person name="Churcher C.M."/>
            <person name="Harris D.E."/>
            <person name="Gordon S.V."/>
            <person name="Eiglmeier K."/>
            <person name="Gas S."/>
            <person name="Barry C.E. III"/>
            <person name="Tekaia F."/>
            <person name="Badcock K."/>
            <person name="Basham D."/>
            <person name="Brown D."/>
            <person name="Chillingworth T."/>
            <person name="Connor R."/>
            <person name="Davies R.M."/>
            <person name="Devlin K."/>
            <person name="Feltwell T."/>
            <person name="Gentles S."/>
            <person name="Hamlin N."/>
            <person name="Holroyd S."/>
            <person name="Hornsby T."/>
            <person name="Jagels K."/>
            <person name="Krogh A."/>
            <person name="McLean J."/>
            <person name="Moule S."/>
            <person name="Murphy L.D."/>
            <person name="Oliver S."/>
            <person name="Osborne J."/>
            <person name="Quail M.A."/>
            <person name="Rajandream M.A."/>
            <person name="Rogers J."/>
            <person name="Rutter S."/>
            <person name="Seeger K."/>
            <person name="Skelton S."/>
            <person name="Squares S."/>
            <person name="Squares R."/>
            <person name="Sulston J.E."/>
            <person name="Taylor K."/>
            <person name="Whitehead S."/>
            <person name="Barrell B.G."/>
        </authorList>
    </citation>
    <scope>NUCLEOTIDE SEQUENCE [LARGE SCALE GENOMIC DNA]</scope>
    <source>
        <strain>ATCC 25618 / H37Rv</strain>
    </source>
</reference>
<reference key="2">
    <citation type="journal article" date="2011" name="Mol. Cell. Proteomics">
        <title>Proteogenomic analysis of Mycobacterium tuberculosis by high resolution mass spectrometry.</title>
        <authorList>
            <person name="Kelkar D.S."/>
            <person name="Kumar D."/>
            <person name="Kumar P."/>
            <person name="Balakrishnan L."/>
            <person name="Muthusamy B."/>
            <person name="Yadav A.K."/>
            <person name="Shrivastava P."/>
            <person name="Marimuthu A."/>
            <person name="Anand S."/>
            <person name="Sundaram H."/>
            <person name="Kingsbury R."/>
            <person name="Harsha H.C."/>
            <person name="Nair B."/>
            <person name="Prasad T.S."/>
            <person name="Chauhan D.S."/>
            <person name="Katoch K."/>
            <person name="Katoch V.M."/>
            <person name="Kumar P."/>
            <person name="Chaerkady R."/>
            <person name="Ramachandran S."/>
            <person name="Dash D."/>
            <person name="Pandey A."/>
        </authorList>
    </citation>
    <scope>IDENTIFICATION BY MASS SPECTROMETRY [LARGE SCALE ANALYSIS]</scope>
    <source>
        <strain>ATCC 25618 / H37Rv</strain>
    </source>
</reference>
<reference key="3">
    <citation type="journal article" date="2008" name="FEMS Microbiol. Lett.">
        <title>Biochemical and structural characterization of the putative dihydropteroate synthase ortholog Rv1207 of Mycobacterium tuberculosis.</title>
        <authorList>
            <person name="Gengenbacher M."/>
            <person name="Xu T."/>
            <person name="Niyomrattanakit P."/>
            <person name="Spraggon G."/>
            <person name="Dick T."/>
        </authorList>
    </citation>
    <scope>X-RAY CRYSTALLOGRAPHY (2.64 ANGSTROMS) OF 2-318</scope>
    <scope>FUNCTION</scope>
    <scope>SUBUNIT</scope>
    <scope>ABSENCE OF DIHYDROPTEROATE SYNTHASE ACTIVITY</scope>
    <source>
        <strain>ATCC 25618 / H37Rv</strain>
    </source>
</reference>
<evidence type="ECO:0000255" key="1">
    <source>
        <dbReference type="PROSITE-ProRule" id="PRU00334"/>
    </source>
</evidence>
<evidence type="ECO:0000256" key="2">
    <source>
        <dbReference type="SAM" id="MobiDB-lite"/>
    </source>
</evidence>
<evidence type="ECO:0000269" key="3">
    <source>
    </source>
</evidence>
<evidence type="ECO:0000305" key="4"/>
<evidence type="ECO:0007829" key="5">
    <source>
        <dbReference type="PDB" id="2VP8"/>
    </source>
</evidence>
<sequence length="318" mass="33046">MRSTPPASAGRSTPPALAGHSTPPALAGHSTLCGRPVAGDRALIMAIVNRTPDSFYDKGATFSDAAARDAVHRAVADGADVIDVGGVKAGPGERVDVDTEITRLVPFIEWLRGAYPDQLISVDTWRAQVAKAACAAGADLINDTWGGVDPAMPEVAAEFGAGLVCAHTGGALPRTRPFRVSYGTTTRGVVDAVISQVTAAAERAVAAGVAREKVLIDPAHDFGKNTFHGLLLLRHVADLVMTGWPVLMALSNKDVVGETLGVDLTERLEGTLAATALAAAAGARMFRVHEVAATRRVLEMVASIQGVRPPTRTVRGLA</sequence>
<accession>P9WNC9</accession>
<accession>L0T8Y8</accession>
<accession>O05308</accession>
<accession>P64139</accession>